<evidence type="ECO:0000255" key="1">
    <source>
        <dbReference type="HAMAP-Rule" id="MF_01147"/>
    </source>
</evidence>
<proteinExistence type="inferred from homology"/>
<dbReference type="EC" id="2.5.1.145" evidence="1"/>
<dbReference type="EMBL" id="CU459141">
    <property type="protein sequence ID" value="CAM88110.1"/>
    <property type="molecule type" value="Genomic_DNA"/>
</dbReference>
<dbReference type="RefSeq" id="WP_000959085.1">
    <property type="nucleotide sequence ID" value="NZ_JBDGFB010000003.1"/>
</dbReference>
<dbReference type="SMR" id="B0V4R4"/>
<dbReference type="EnsemblBacteria" id="CAM88110">
    <property type="protein sequence ID" value="CAM88110"/>
    <property type="gene ID" value="ABAYE3311"/>
</dbReference>
<dbReference type="KEGG" id="aby:ABAYE3311"/>
<dbReference type="HOGENOM" id="CLU_013386_1_0_6"/>
<dbReference type="UniPathway" id="UPA00664"/>
<dbReference type="GO" id="GO:0005886">
    <property type="term" value="C:plasma membrane"/>
    <property type="evidence" value="ECO:0007669"/>
    <property type="project" value="UniProtKB-SubCell"/>
</dbReference>
<dbReference type="GO" id="GO:0008961">
    <property type="term" value="F:phosphatidylglycerol-prolipoprotein diacylglyceryl transferase activity"/>
    <property type="evidence" value="ECO:0007669"/>
    <property type="project" value="UniProtKB-UniRule"/>
</dbReference>
<dbReference type="GO" id="GO:0042158">
    <property type="term" value="P:lipoprotein biosynthetic process"/>
    <property type="evidence" value="ECO:0007669"/>
    <property type="project" value="UniProtKB-UniRule"/>
</dbReference>
<dbReference type="HAMAP" id="MF_01147">
    <property type="entry name" value="Lgt"/>
    <property type="match status" value="1"/>
</dbReference>
<dbReference type="InterPro" id="IPR001640">
    <property type="entry name" value="Lgt"/>
</dbReference>
<dbReference type="NCBIfam" id="TIGR00544">
    <property type="entry name" value="lgt"/>
    <property type="match status" value="1"/>
</dbReference>
<dbReference type="PANTHER" id="PTHR30589:SF0">
    <property type="entry name" value="PHOSPHATIDYLGLYCEROL--PROLIPOPROTEIN DIACYLGLYCERYL TRANSFERASE"/>
    <property type="match status" value="1"/>
</dbReference>
<dbReference type="PANTHER" id="PTHR30589">
    <property type="entry name" value="PROLIPOPROTEIN DIACYLGLYCERYL TRANSFERASE"/>
    <property type="match status" value="1"/>
</dbReference>
<dbReference type="Pfam" id="PF01790">
    <property type="entry name" value="LGT"/>
    <property type="match status" value="1"/>
</dbReference>
<dbReference type="PROSITE" id="PS01311">
    <property type="entry name" value="LGT"/>
    <property type="match status" value="1"/>
</dbReference>
<sequence length="272" mass="31387">MLTYPNIDPVAIHLGPLQVHWYGLMYLLAFLCAWGLASYRAKQRDGWTSDMVSDLVFYGALGVVLGGRIGYVLFYEFDKFLENPIWLFQVWTGGMSFHGGFLGVMIAMLFWCKKYQKTWFQTLDFVAPCVPTGLMFGRIGNFIGGELYGRAVTDPNYPFGMIFPTDPLHLVRHPSQIYQALCEGLLLFIILWWFSSKPRPRMAVSALFLMGYGVARFVMEFFRQPDADQGFILFGWMTKGQILTVPMLLIGLWMMWYAYQKKIYDWGPQKNS</sequence>
<feature type="chain" id="PRO_1000137393" description="Phosphatidylglycerol--prolipoprotein diacylglyceryl transferase">
    <location>
        <begin position="1"/>
        <end position="272"/>
    </location>
</feature>
<feature type="transmembrane region" description="Helical" evidence="1">
    <location>
        <begin position="17"/>
        <end position="37"/>
    </location>
</feature>
<feature type="transmembrane region" description="Helical" evidence="1">
    <location>
        <begin position="55"/>
        <end position="75"/>
    </location>
</feature>
<feature type="transmembrane region" description="Helical" evidence="1">
    <location>
        <begin position="90"/>
        <end position="110"/>
    </location>
</feature>
<feature type="transmembrane region" description="Helical" evidence="1">
    <location>
        <begin position="125"/>
        <end position="145"/>
    </location>
</feature>
<feature type="transmembrane region" description="Helical" evidence="1">
    <location>
        <begin position="174"/>
        <end position="194"/>
    </location>
</feature>
<feature type="transmembrane region" description="Helical" evidence="1">
    <location>
        <begin position="202"/>
        <end position="222"/>
    </location>
</feature>
<feature type="transmembrane region" description="Helical" evidence="1">
    <location>
        <begin position="230"/>
        <end position="250"/>
    </location>
</feature>
<feature type="binding site" evidence="1">
    <location>
        <position position="138"/>
    </location>
    <ligand>
        <name>a 1,2-diacyl-sn-glycero-3-phospho-(1'-sn-glycerol)</name>
        <dbReference type="ChEBI" id="CHEBI:64716"/>
    </ligand>
</feature>
<gene>
    <name evidence="1" type="primary">lgt</name>
    <name type="ordered locus">ABAYE3311</name>
</gene>
<accession>B0V4R4</accession>
<reference key="1">
    <citation type="journal article" date="2008" name="PLoS ONE">
        <title>Comparative analysis of Acinetobacters: three genomes for three lifestyles.</title>
        <authorList>
            <person name="Vallenet D."/>
            <person name="Nordmann P."/>
            <person name="Barbe V."/>
            <person name="Poirel L."/>
            <person name="Mangenot S."/>
            <person name="Bataille E."/>
            <person name="Dossat C."/>
            <person name="Gas S."/>
            <person name="Kreimeyer A."/>
            <person name="Lenoble P."/>
            <person name="Oztas S."/>
            <person name="Poulain J."/>
            <person name="Segurens B."/>
            <person name="Robert C."/>
            <person name="Abergel C."/>
            <person name="Claverie J.-M."/>
            <person name="Raoult D."/>
            <person name="Medigue C."/>
            <person name="Weissenbach J."/>
            <person name="Cruveiller S."/>
        </authorList>
    </citation>
    <scope>NUCLEOTIDE SEQUENCE [LARGE SCALE GENOMIC DNA]</scope>
    <source>
        <strain>AYE</strain>
    </source>
</reference>
<name>LGT_ACIBY</name>
<protein>
    <recommendedName>
        <fullName evidence="1">Phosphatidylglycerol--prolipoprotein diacylglyceryl transferase</fullName>
        <ecNumber evidence="1">2.5.1.145</ecNumber>
    </recommendedName>
</protein>
<organism>
    <name type="scientific">Acinetobacter baumannii (strain AYE)</name>
    <dbReference type="NCBI Taxonomy" id="509173"/>
    <lineage>
        <taxon>Bacteria</taxon>
        <taxon>Pseudomonadati</taxon>
        <taxon>Pseudomonadota</taxon>
        <taxon>Gammaproteobacteria</taxon>
        <taxon>Moraxellales</taxon>
        <taxon>Moraxellaceae</taxon>
        <taxon>Acinetobacter</taxon>
        <taxon>Acinetobacter calcoaceticus/baumannii complex</taxon>
    </lineage>
</organism>
<keyword id="KW-0997">Cell inner membrane</keyword>
<keyword id="KW-1003">Cell membrane</keyword>
<keyword id="KW-0472">Membrane</keyword>
<keyword id="KW-0808">Transferase</keyword>
<keyword id="KW-0812">Transmembrane</keyword>
<keyword id="KW-1133">Transmembrane helix</keyword>
<comment type="function">
    <text evidence="1">Catalyzes the transfer of the diacylglyceryl group from phosphatidylglycerol to the sulfhydryl group of the N-terminal cysteine of a prolipoprotein, the first step in the formation of mature lipoproteins.</text>
</comment>
<comment type="catalytic activity">
    <reaction evidence="1">
        <text>L-cysteinyl-[prolipoprotein] + a 1,2-diacyl-sn-glycero-3-phospho-(1'-sn-glycerol) = an S-1,2-diacyl-sn-glyceryl-L-cysteinyl-[prolipoprotein] + sn-glycerol 1-phosphate + H(+)</text>
        <dbReference type="Rhea" id="RHEA:56712"/>
        <dbReference type="Rhea" id="RHEA-COMP:14679"/>
        <dbReference type="Rhea" id="RHEA-COMP:14680"/>
        <dbReference type="ChEBI" id="CHEBI:15378"/>
        <dbReference type="ChEBI" id="CHEBI:29950"/>
        <dbReference type="ChEBI" id="CHEBI:57685"/>
        <dbReference type="ChEBI" id="CHEBI:64716"/>
        <dbReference type="ChEBI" id="CHEBI:140658"/>
        <dbReference type="EC" id="2.5.1.145"/>
    </reaction>
</comment>
<comment type="pathway">
    <text evidence="1">Protein modification; lipoprotein biosynthesis (diacylglyceryl transfer).</text>
</comment>
<comment type="subcellular location">
    <subcellularLocation>
        <location evidence="1">Cell inner membrane</location>
        <topology evidence="1">Multi-pass membrane protein</topology>
    </subcellularLocation>
</comment>
<comment type="similarity">
    <text evidence="1">Belongs to the Lgt family.</text>
</comment>